<reference key="1">
    <citation type="journal article" date="1999" name="Placenta">
        <title>Isolation and sequence analysis of a cDNA encoding human placental tissue protein 13 (PP13), a new lysophospholipase, homologue of human eosinophil Charcot-Leyden crystal protein.</title>
        <authorList>
            <person name="Than N.G."/>
            <person name="Sumegi B."/>
            <person name="Than G.N."/>
            <person name="Berente Z."/>
            <person name="Bohn H."/>
        </authorList>
    </citation>
    <scope>NUCLEOTIDE SEQUENCE [MRNA]</scope>
    <scope>FUNCTION</scope>
    <scope>TISSUE SPECIFICITY</scope>
    <source>
        <tissue>Placenta</tissue>
    </source>
</reference>
<reference key="2">
    <citation type="submission" date="2001-09" db="EMBL/GenBank/DDBJ databases">
        <title>Placental protein 13 (PP13), a serum marker for pregnancy disorders.</title>
        <authorList>
            <person name="Admon A."/>
            <person name="Paltieli Y."/>
            <person name="Slotky R."/>
            <person name="Mandel S."/>
        </authorList>
    </citation>
    <scope>NUCLEOTIDE SEQUENCE [MRNA]</scope>
    <source>
        <tissue>Placenta</tissue>
    </source>
</reference>
<reference key="3">
    <citation type="journal article" date="2009" name="Proc. Natl. Acad. Sci. U.S.A.">
        <title>A primate subfamily of galectins expressed at the maternal-fetal interface that promote immune cell death.</title>
        <authorList>
            <person name="Than N.G."/>
            <person name="Romero R."/>
            <person name="Goodman M."/>
            <person name="Weckle A."/>
            <person name="Xing J."/>
            <person name="Dong Z."/>
            <person name="Xu Y."/>
            <person name="Tarquini F."/>
            <person name="Szilagyi A."/>
            <person name="Gal P."/>
            <person name="Hou Z."/>
            <person name="Tarca A.L."/>
            <person name="Kim C.J."/>
            <person name="Kim J.S."/>
            <person name="Haidarian S."/>
            <person name="Uddin M."/>
            <person name="Bohn H."/>
            <person name="Benirschke K."/>
            <person name="Santolaya-Forgas J."/>
            <person name="Grossman L.I."/>
            <person name="Erez O."/>
            <person name="Hassan S.S."/>
            <person name="Zavodszky P."/>
            <person name="Papp Z."/>
            <person name="Wildman D.E."/>
        </authorList>
    </citation>
    <scope>NUCLEOTIDE SEQUENCE [MRNA]</scope>
    <scope>FUNCTION</scope>
    <scope>TISSUE SPECIFICITY</scope>
    <source>
        <tissue>Placenta</tissue>
    </source>
</reference>
<reference key="4">
    <citation type="submission" date="2005-07" db="EMBL/GenBank/DDBJ databases">
        <authorList>
            <person name="Mural R.J."/>
            <person name="Istrail S."/>
            <person name="Sutton G."/>
            <person name="Florea L."/>
            <person name="Halpern A.L."/>
            <person name="Mobarry C.M."/>
            <person name="Lippert R."/>
            <person name="Walenz B."/>
            <person name="Shatkay H."/>
            <person name="Dew I."/>
            <person name="Miller J.R."/>
            <person name="Flanigan M.J."/>
            <person name="Edwards N.J."/>
            <person name="Bolanos R."/>
            <person name="Fasulo D."/>
            <person name="Halldorsson B.V."/>
            <person name="Hannenhalli S."/>
            <person name="Turner R."/>
            <person name="Yooseph S."/>
            <person name="Lu F."/>
            <person name="Nusskern D.R."/>
            <person name="Shue B.C."/>
            <person name="Zheng X.H."/>
            <person name="Zhong F."/>
            <person name="Delcher A.L."/>
            <person name="Huson D.H."/>
            <person name="Kravitz S.A."/>
            <person name="Mouchard L."/>
            <person name="Reinert K."/>
            <person name="Remington K.A."/>
            <person name="Clark A.G."/>
            <person name="Waterman M.S."/>
            <person name="Eichler E.E."/>
            <person name="Adams M.D."/>
            <person name="Hunkapiller M.W."/>
            <person name="Myers E.W."/>
            <person name="Venter J.C."/>
        </authorList>
    </citation>
    <scope>NUCLEOTIDE SEQUENCE [LARGE SCALE GENOMIC DNA]</scope>
</reference>
<reference key="5">
    <citation type="journal article" date="2004" name="Genome Res.">
        <title>The status, quality, and expansion of the NIH full-length cDNA project: the Mammalian Gene Collection (MGC).</title>
        <authorList>
            <consortium name="The MGC Project Team"/>
        </authorList>
    </citation>
    <scope>NUCLEOTIDE SEQUENCE [LARGE SCALE MRNA]</scope>
    <source>
        <tissue>Placenta</tissue>
    </source>
</reference>
<reference key="6">
    <citation type="journal article" date="1983" name="Oncodev. Biol. Med.">
        <title>Purification and characterization of two new soluble placental tissue proteins (PP13 and PP17).</title>
        <authorList>
            <person name="Bohn H."/>
            <person name="Kraus W."/>
            <person name="Winckler W."/>
        </authorList>
    </citation>
    <scope>SUBUNIT</scope>
    <source>
        <tissue>Placenta</tissue>
    </source>
</reference>
<reference key="7">
    <citation type="journal article" date="2001" name="Protein Eng.">
        <title>Homology modelling and molecular dynamics studies of human placental tissue protein 13 (galectin-13).</title>
        <authorList>
            <person name="Visegrady B."/>
            <person name="Than N.G."/>
            <person name="Kilar F."/>
            <person name="Suemegi B."/>
            <person name="Than G.N."/>
            <person name="Bohn H."/>
        </authorList>
    </citation>
    <scope>3D-STRUCTURE MODELING</scope>
</reference>
<reference evidence="6 7 8" key="8">
    <citation type="journal article" date="2018" name="Sci. Rep.">
        <title>Galectin-13, a different prototype galectin, does not bind beta-galacto-sides and forms dimers via intermolecular disulfide bridges between Cys-136 and Cys-138.</title>
        <authorList>
            <person name="Su J."/>
            <person name="Wang Y."/>
            <person name="Si Y."/>
            <person name="Gao J."/>
            <person name="Song C."/>
            <person name="Cui L."/>
            <person name="Wu R."/>
            <person name="Tai G."/>
            <person name="Zhou Y."/>
        </authorList>
    </citation>
    <scope>X-RAY CRYSTALLOGRAPHY (1.55 ANGSTROMS) OF 2-139 OF WILD TYPE AND MUTANT HIS-53</scope>
    <scope>FUNCTION</scope>
    <scope>DISULFIDE BOND</scope>
    <scope>SUBUNIT</scope>
    <scope>SUBCELLULAR LOCATION</scope>
    <scope>MUTAGENESIS OF ARG-53; CYS-136 AND CYS-138</scope>
</reference>
<evidence type="ECO:0000255" key="1">
    <source>
        <dbReference type="PROSITE-ProRule" id="PRU00639"/>
    </source>
</evidence>
<evidence type="ECO:0000269" key="2">
    <source>
    </source>
</evidence>
<evidence type="ECO:0000269" key="3">
    <source>
    </source>
</evidence>
<evidence type="ECO:0000269" key="4">
    <source>
    </source>
</evidence>
<evidence type="ECO:0000269" key="5">
    <source>
    </source>
</evidence>
<evidence type="ECO:0007744" key="6">
    <source>
        <dbReference type="PDB" id="5XG7"/>
    </source>
</evidence>
<evidence type="ECO:0007744" key="7">
    <source>
        <dbReference type="PDB" id="5XG8"/>
    </source>
</evidence>
<evidence type="ECO:0007744" key="8">
    <source>
        <dbReference type="PDB" id="5Y03"/>
    </source>
</evidence>
<evidence type="ECO:0007829" key="9">
    <source>
        <dbReference type="PDB" id="6KJW"/>
    </source>
</evidence>
<feature type="chain" id="PRO_0000076963" description="Galactoside-binding soluble lectin 13">
    <location>
        <begin position="1"/>
        <end position="139"/>
    </location>
</feature>
<feature type="domain" description="Galectin" evidence="1">
    <location>
        <begin position="6"/>
        <end position="138"/>
    </location>
</feature>
<feature type="disulfide bond" description="Interchain (with C-138)" evidence="4">
    <location>
        <position position="136"/>
    </location>
</feature>
<feature type="disulfide bond" description="Interchain (with C-136)" evidence="4">
    <location>
        <position position="138"/>
    </location>
</feature>
<feature type="mutagenesis site" description="No effect on its haemagglutinating activity." evidence="4">
    <original>R</original>
    <variation>H</variation>
    <location>
        <position position="53"/>
    </location>
</feature>
<feature type="mutagenesis site" description="Loss of homodimerization; when associated with S-138." evidence="4">
    <original>C</original>
    <variation>S</variation>
    <location>
        <position position="136"/>
    </location>
</feature>
<feature type="mutagenesis site" description="Loss of homodimerization; when associated with S-136." evidence="4">
    <original>C</original>
    <variation>S</variation>
    <location>
        <position position="138"/>
    </location>
</feature>
<feature type="strand" evidence="9">
    <location>
        <begin position="6"/>
        <end position="11"/>
    </location>
</feature>
<feature type="strand" evidence="9">
    <location>
        <begin position="19"/>
        <end position="26"/>
    </location>
</feature>
<feature type="strand" evidence="9">
    <location>
        <begin position="31"/>
        <end position="33"/>
    </location>
</feature>
<feature type="strand" evidence="9">
    <location>
        <begin position="35"/>
        <end position="45"/>
    </location>
</feature>
<feature type="strand" evidence="9">
    <location>
        <begin position="50"/>
        <end position="57"/>
    </location>
</feature>
<feature type="turn" evidence="9">
    <location>
        <begin position="58"/>
        <end position="60"/>
    </location>
</feature>
<feature type="strand" evidence="9">
    <location>
        <begin position="61"/>
        <end position="68"/>
    </location>
</feature>
<feature type="strand" evidence="9">
    <location>
        <begin position="76"/>
        <end position="79"/>
    </location>
</feature>
<feature type="strand" evidence="9">
    <location>
        <begin position="89"/>
        <end position="95"/>
    </location>
</feature>
<feature type="strand" evidence="9">
    <location>
        <begin position="97"/>
        <end position="104"/>
    </location>
</feature>
<feature type="strand" evidence="9">
    <location>
        <begin position="107"/>
        <end position="113"/>
    </location>
</feature>
<feature type="helix" evidence="9">
    <location>
        <begin position="118"/>
        <end position="120"/>
    </location>
</feature>
<feature type="strand" evidence="9">
    <location>
        <begin position="123"/>
        <end position="137"/>
    </location>
</feature>
<sequence length="139" mass="16119">MSSLPVPYKLPVSLSVGSCVIIKGTPIHSFINDPQLQVDFYTDMDEDSDIAFRFRVHFGNHVVMNRREFGIWMLEETTDYVPFEDGKQFELCIYVHYNEYEIKVNGIRIYGFVHRIPPSFVKMVQVSRDISLTSVCVCN</sequence>
<accession>Q9UHV8</accession>
<accession>C5HZ15</accession>
<keyword id="KW-0002">3D-structure</keyword>
<keyword id="KW-0053">Apoptosis</keyword>
<keyword id="KW-0963">Cytoplasm</keyword>
<keyword id="KW-1015">Disulfide bond</keyword>
<keyword id="KW-0348">Hemagglutinin</keyword>
<keyword id="KW-0430">Lectin</keyword>
<keyword id="KW-0539">Nucleus</keyword>
<keyword id="KW-1267">Proteomics identification</keyword>
<keyword id="KW-1185">Reference proteome</keyword>
<comment type="function">
    <text evidence="2 3 4">Binds beta-galactoside and lactose. Strong inducer of T-cell apoptosis (PubMed:10527825, PubMed:19497882). Has hemagglutinating activity towards chicken erythrocytes (PubMed:29343868).</text>
</comment>
<comment type="subunit">
    <text evidence="4 5">Homodimer; disulfide-linked.</text>
</comment>
<comment type="interaction">
    <interactant intactId="EBI-3957707">
        <id>Q9UHV8</id>
    </interactant>
    <interactant intactId="EBI-10192698">
        <id>Q02930-3</id>
        <label>CREB5</label>
    </interactant>
    <organismsDiffer>false</organismsDiffer>
    <experiments>3</experiments>
</comment>
<comment type="interaction">
    <interactant intactId="EBI-3957707">
        <id>Q9UHV8</id>
    </interactant>
    <interactant intactId="EBI-740785">
        <id>P49639</id>
        <label>HOXA1</label>
    </interactant>
    <organismsDiffer>false</organismsDiffer>
    <experiments>6</experiments>
</comment>
<comment type="interaction">
    <interactant intactId="EBI-3957707">
        <id>Q9UHV8</id>
    </interactant>
    <interactant intactId="EBI-1210753">
        <id>Q7Z417</id>
        <label>NUFIP2</label>
    </interactant>
    <organismsDiffer>false</organismsDiffer>
    <experiments>3</experiments>
</comment>
<comment type="interaction">
    <interactant intactId="EBI-3957707">
        <id>Q9UHV8</id>
    </interactant>
    <interactant intactId="EBI-740446">
        <id>P32242</id>
        <label>OTX1</label>
    </interactant>
    <organismsDiffer>false</organismsDiffer>
    <experiments>3</experiments>
</comment>
<comment type="interaction">
    <interactant intactId="EBI-3957707">
        <id>Q9UHV8</id>
    </interactant>
    <interactant intactId="EBI-77926">
        <id>Q9UKS6</id>
        <label>PACSIN3</label>
    </interactant>
    <organismsDiffer>false</organismsDiffer>
    <experiments>3</experiments>
</comment>
<comment type="interaction">
    <interactant intactId="EBI-3957707">
        <id>Q9UHV8</id>
    </interactant>
    <interactant intactId="EBI-14084211">
        <id>A2BDE7</id>
        <label>PHLDA1</label>
    </interactant>
    <organismsDiffer>false</organismsDiffer>
    <experiments>3</experiments>
</comment>
<comment type="interaction">
    <interactant intactId="EBI-3957707">
        <id>Q9UHV8</id>
    </interactant>
    <interactant intactId="EBI-17236143">
        <id>Q12837</id>
        <label>POU4F2</label>
    </interactant>
    <organismsDiffer>false</organismsDiffer>
    <experiments>3</experiments>
</comment>
<comment type="interaction">
    <interactant intactId="EBI-3957707">
        <id>Q9UHV8</id>
    </interactant>
    <interactant intactId="EBI-3957603">
        <id>P09022</id>
        <label>Hoxa1</label>
    </interactant>
    <organismsDiffer>true</organismsDiffer>
    <experiments>3</experiments>
</comment>
<comment type="subcellular location">
    <subcellularLocation>
        <location evidence="4">Cytoplasm</location>
    </subcellularLocation>
    <subcellularLocation>
        <location evidence="4">Nucleus matrix</location>
    </subcellularLocation>
</comment>
<comment type="tissue specificity">
    <text evidence="2 3">Detected in adult and fetal spleen, fetal kidney, adult urinary bladder and placenta. Placental expression originates predominantly from the syncytiotrophoblast.</text>
</comment>
<protein>
    <recommendedName>
        <fullName>Galactoside-binding soluble lectin 13</fullName>
    </recommendedName>
    <alternativeName>
        <fullName>Galectin-13</fullName>
        <shortName>Gal-13</shortName>
    </alternativeName>
    <alternativeName>
        <fullName>Placental tissue protein 13</fullName>
        <shortName>PP13</shortName>
        <shortName>Placental protein 13</shortName>
    </alternativeName>
</protein>
<gene>
    <name type="primary">LGALS13</name>
    <name type="synonym">PLAC8</name>
</gene>
<dbReference type="EMBL" id="AF117383">
    <property type="protein sequence ID" value="AAF22001.1"/>
    <property type="molecule type" value="mRNA"/>
</dbReference>
<dbReference type="EMBL" id="AY055826">
    <property type="protein sequence ID" value="AAL09162.1"/>
    <property type="molecule type" value="mRNA"/>
</dbReference>
<dbReference type="EMBL" id="FJ613336">
    <property type="protein sequence ID" value="ACR09638.1"/>
    <property type="molecule type" value="mRNA"/>
</dbReference>
<dbReference type="EMBL" id="FJ613337">
    <property type="protein sequence ID" value="ACR09639.1"/>
    <property type="molecule type" value="mRNA"/>
</dbReference>
<dbReference type="EMBL" id="FJ613338">
    <property type="protein sequence ID" value="ACR09640.1"/>
    <property type="molecule type" value="mRNA"/>
</dbReference>
<dbReference type="EMBL" id="CH471126">
    <property type="protein sequence ID" value="EAW56910.1"/>
    <property type="molecule type" value="Genomic_DNA"/>
</dbReference>
<dbReference type="EMBL" id="BC066304">
    <property type="protein sequence ID" value="AAH66304.1"/>
    <property type="molecule type" value="mRNA"/>
</dbReference>
<dbReference type="EMBL" id="BC069312">
    <property type="protein sequence ID" value="AAH69312.1"/>
    <property type="molecule type" value="mRNA"/>
</dbReference>
<dbReference type="CCDS" id="CCDS33024.1"/>
<dbReference type="RefSeq" id="NP_037400.1">
    <property type="nucleotide sequence ID" value="NM_013268.3"/>
</dbReference>
<dbReference type="PDB" id="5XG7">
    <property type="method" value="X-ray"/>
    <property type="resolution" value="1.55 A"/>
    <property type="chains" value="A=1-139"/>
</dbReference>
<dbReference type="PDB" id="5XG8">
    <property type="method" value="X-ray"/>
    <property type="resolution" value="1.55 A"/>
    <property type="chains" value="A=2-139"/>
</dbReference>
<dbReference type="PDB" id="5Y03">
    <property type="method" value="X-ray"/>
    <property type="resolution" value="2.12 A"/>
    <property type="chains" value="A=1-139"/>
</dbReference>
<dbReference type="PDB" id="6A62">
    <property type="method" value="X-ray"/>
    <property type="resolution" value="2.03 A"/>
    <property type="chains" value="A=2-139"/>
</dbReference>
<dbReference type="PDB" id="6A63">
    <property type="method" value="X-ray"/>
    <property type="resolution" value="1.63 A"/>
    <property type="chains" value="A=2-139"/>
</dbReference>
<dbReference type="PDB" id="6A64">
    <property type="method" value="X-ray"/>
    <property type="resolution" value="1.63 A"/>
    <property type="chains" value="A=2-139"/>
</dbReference>
<dbReference type="PDB" id="6A65">
    <property type="method" value="X-ray"/>
    <property type="resolution" value="1.77 A"/>
    <property type="chains" value="A=2-139"/>
</dbReference>
<dbReference type="PDB" id="6A66">
    <property type="method" value="X-ray"/>
    <property type="resolution" value="1.40 A"/>
    <property type="chains" value="A=2-139"/>
</dbReference>
<dbReference type="PDB" id="6KJW">
    <property type="method" value="X-ray"/>
    <property type="resolution" value="1.36 A"/>
    <property type="chains" value="A=1-139"/>
</dbReference>
<dbReference type="PDB" id="6KJX">
    <property type="method" value="X-ray"/>
    <property type="resolution" value="1.53 A"/>
    <property type="chains" value="A=1-139"/>
</dbReference>
<dbReference type="PDB" id="6KJY">
    <property type="method" value="X-ray"/>
    <property type="resolution" value="1.50 A"/>
    <property type="chains" value="A=1-139"/>
</dbReference>
<dbReference type="PDBsum" id="5XG7"/>
<dbReference type="PDBsum" id="5XG8"/>
<dbReference type="PDBsum" id="5Y03"/>
<dbReference type="PDBsum" id="6A62"/>
<dbReference type="PDBsum" id="6A63"/>
<dbReference type="PDBsum" id="6A64"/>
<dbReference type="PDBsum" id="6A65"/>
<dbReference type="PDBsum" id="6A66"/>
<dbReference type="PDBsum" id="6KJW"/>
<dbReference type="PDBsum" id="6KJX"/>
<dbReference type="PDBsum" id="6KJY"/>
<dbReference type="SMR" id="Q9UHV8"/>
<dbReference type="BioGRID" id="118889">
    <property type="interactions" value="16"/>
</dbReference>
<dbReference type="FunCoup" id="Q9UHV8">
    <property type="interactions" value="16"/>
</dbReference>
<dbReference type="IntAct" id="Q9UHV8">
    <property type="interactions" value="14"/>
</dbReference>
<dbReference type="MINT" id="Q9UHV8"/>
<dbReference type="STRING" id="9606.ENSP00000221797"/>
<dbReference type="UniLectin" id="Q9UHV8"/>
<dbReference type="BioMuta" id="LGALS13"/>
<dbReference type="DMDM" id="41017510"/>
<dbReference type="MassIVE" id="Q9UHV8"/>
<dbReference type="PaxDb" id="9606-ENSP00000221797"/>
<dbReference type="PeptideAtlas" id="Q9UHV8"/>
<dbReference type="ProteomicsDB" id="84418"/>
<dbReference type="Antibodypedia" id="16851">
    <property type="antibodies" value="468 antibodies from 22 providers"/>
</dbReference>
<dbReference type="DNASU" id="29124"/>
<dbReference type="Ensembl" id="ENST00000221797.5">
    <property type="protein sequence ID" value="ENSP00000221797.3"/>
    <property type="gene ID" value="ENSG00000105198.12"/>
</dbReference>
<dbReference type="GeneID" id="29124"/>
<dbReference type="KEGG" id="hsa:29124"/>
<dbReference type="MANE-Select" id="ENST00000221797.5">
    <property type="protein sequence ID" value="ENSP00000221797.3"/>
    <property type="RefSeq nucleotide sequence ID" value="NM_013268.3"/>
    <property type="RefSeq protein sequence ID" value="NP_037400.1"/>
</dbReference>
<dbReference type="UCSC" id="uc002omb.4">
    <property type="organism name" value="human"/>
</dbReference>
<dbReference type="AGR" id="HGNC:15449"/>
<dbReference type="CTD" id="29124"/>
<dbReference type="DisGeNET" id="29124"/>
<dbReference type="GeneCards" id="LGALS13"/>
<dbReference type="HGNC" id="HGNC:15449">
    <property type="gene designation" value="LGALS13"/>
</dbReference>
<dbReference type="HPA" id="ENSG00000105198">
    <property type="expression patterns" value="Tissue enriched (placenta)"/>
</dbReference>
<dbReference type="MIM" id="608717">
    <property type="type" value="gene"/>
</dbReference>
<dbReference type="neXtProt" id="NX_Q9UHV8"/>
<dbReference type="OpenTargets" id="ENSG00000105198"/>
<dbReference type="PharmGKB" id="PA134923011"/>
<dbReference type="VEuPathDB" id="HostDB:ENSG00000105198"/>
<dbReference type="eggNOG" id="KOG3587">
    <property type="taxonomic scope" value="Eukaryota"/>
</dbReference>
<dbReference type="GeneTree" id="ENSGT00940000162909"/>
<dbReference type="HOGENOM" id="CLU_037794_4_0_1"/>
<dbReference type="InParanoid" id="Q9UHV8"/>
<dbReference type="OMA" id="SDIAFCF"/>
<dbReference type="OrthoDB" id="5795596at2759"/>
<dbReference type="PAN-GO" id="Q9UHV8">
    <property type="GO annotations" value="0 GO annotations based on evolutionary models"/>
</dbReference>
<dbReference type="PhylomeDB" id="Q9UHV8"/>
<dbReference type="TreeFam" id="TF315551"/>
<dbReference type="PathwayCommons" id="Q9UHV8"/>
<dbReference type="SignaLink" id="Q9UHV8"/>
<dbReference type="BioGRID-ORCS" id="29124">
    <property type="hits" value="9 hits in 1108 CRISPR screens"/>
</dbReference>
<dbReference type="GeneWiki" id="LGALS13"/>
<dbReference type="GenomeRNAi" id="29124"/>
<dbReference type="Pharos" id="Q9UHV8">
    <property type="development level" value="Tbio"/>
</dbReference>
<dbReference type="PRO" id="PR:Q9UHV8"/>
<dbReference type="Proteomes" id="UP000005640">
    <property type="component" value="Chromosome 19"/>
</dbReference>
<dbReference type="RNAct" id="Q9UHV8">
    <property type="molecule type" value="protein"/>
</dbReference>
<dbReference type="Bgee" id="ENSG00000105198">
    <property type="expression patterns" value="Expressed in placenta and 34 other cell types or tissues"/>
</dbReference>
<dbReference type="ExpressionAtlas" id="Q9UHV8">
    <property type="expression patterns" value="baseline and differential"/>
</dbReference>
<dbReference type="GO" id="GO:0005737">
    <property type="term" value="C:cytoplasm"/>
    <property type="evidence" value="ECO:0000314"/>
    <property type="project" value="UniProtKB"/>
</dbReference>
<dbReference type="GO" id="GO:0016604">
    <property type="term" value="C:nuclear body"/>
    <property type="evidence" value="ECO:0000314"/>
    <property type="project" value="HPA"/>
</dbReference>
<dbReference type="GO" id="GO:0016363">
    <property type="term" value="C:nuclear matrix"/>
    <property type="evidence" value="ECO:0000314"/>
    <property type="project" value="UniProtKB"/>
</dbReference>
<dbReference type="GO" id="GO:0005654">
    <property type="term" value="C:nucleoplasm"/>
    <property type="evidence" value="ECO:0000314"/>
    <property type="project" value="HPA"/>
</dbReference>
<dbReference type="GO" id="GO:0030246">
    <property type="term" value="F:carbohydrate binding"/>
    <property type="evidence" value="ECO:0000318"/>
    <property type="project" value="GO_Central"/>
</dbReference>
<dbReference type="GO" id="GO:0004622">
    <property type="term" value="F:lysophospholipase activity"/>
    <property type="evidence" value="ECO:0000304"/>
    <property type="project" value="ProtInc"/>
</dbReference>
<dbReference type="GO" id="GO:0006915">
    <property type="term" value="P:apoptotic process"/>
    <property type="evidence" value="ECO:0007669"/>
    <property type="project" value="UniProtKB-KW"/>
</dbReference>
<dbReference type="GO" id="GO:0006644">
    <property type="term" value="P:phospholipid metabolic process"/>
    <property type="evidence" value="ECO:0000304"/>
    <property type="project" value="ProtInc"/>
</dbReference>
<dbReference type="CDD" id="cd00070">
    <property type="entry name" value="GLECT"/>
    <property type="match status" value="1"/>
</dbReference>
<dbReference type="FunFam" id="2.60.120.200:FF:000176">
    <property type="entry name" value="Galectin"/>
    <property type="match status" value="1"/>
</dbReference>
<dbReference type="Gene3D" id="2.60.120.200">
    <property type="match status" value="1"/>
</dbReference>
<dbReference type="InterPro" id="IPR013320">
    <property type="entry name" value="ConA-like_dom_sf"/>
</dbReference>
<dbReference type="InterPro" id="IPR044156">
    <property type="entry name" value="Galectin-like"/>
</dbReference>
<dbReference type="InterPro" id="IPR001079">
    <property type="entry name" value="Galectin_CRD"/>
</dbReference>
<dbReference type="PANTHER" id="PTHR11346:SF120">
    <property type="entry name" value="GALACTOSIDE-BINDING SOLUBLE LECTIN 13-RELATED"/>
    <property type="match status" value="1"/>
</dbReference>
<dbReference type="PANTHER" id="PTHR11346">
    <property type="entry name" value="GALECTIN"/>
    <property type="match status" value="1"/>
</dbReference>
<dbReference type="Pfam" id="PF00337">
    <property type="entry name" value="Gal-bind_lectin"/>
    <property type="match status" value="1"/>
</dbReference>
<dbReference type="SMART" id="SM00908">
    <property type="entry name" value="Gal-bind_lectin"/>
    <property type="match status" value="1"/>
</dbReference>
<dbReference type="SMART" id="SM00276">
    <property type="entry name" value="GLECT"/>
    <property type="match status" value="1"/>
</dbReference>
<dbReference type="SUPFAM" id="SSF49899">
    <property type="entry name" value="Concanavalin A-like lectins/glucanases"/>
    <property type="match status" value="1"/>
</dbReference>
<dbReference type="PROSITE" id="PS51304">
    <property type="entry name" value="GALECTIN"/>
    <property type="match status" value="1"/>
</dbReference>
<proteinExistence type="evidence at protein level"/>
<organism>
    <name type="scientific">Homo sapiens</name>
    <name type="common">Human</name>
    <dbReference type="NCBI Taxonomy" id="9606"/>
    <lineage>
        <taxon>Eukaryota</taxon>
        <taxon>Metazoa</taxon>
        <taxon>Chordata</taxon>
        <taxon>Craniata</taxon>
        <taxon>Vertebrata</taxon>
        <taxon>Euteleostomi</taxon>
        <taxon>Mammalia</taxon>
        <taxon>Eutheria</taxon>
        <taxon>Euarchontoglires</taxon>
        <taxon>Primates</taxon>
        <taxon>Haplorrhini</taxon>
        <taxon>Catarrhini</taxon>
        <taxon>Hominidae</taxon>
        <taxon>Homo</taxon>
    </lineage>
</organism>
<name>PP13_HUMAN</name>